<name>SMIP4_BOVIN</name>
<reference key="1">
    <citation type="journal article" date="2009" name="Genome Biol.">
        <title>A whole-genome assembly of the domestic cow, Bos taurus.</title>
        <authorList>
            <person name="Zimin A.V."/>
            <person name="Delcher A.L."/>
            <person name="Florea L."/>
            <person name="Kelley D.R."/>
            <person name="Schatz M.C."/>
            <person name="Puiu D."/>
            <person name="Hanrahan F."/>
            <person name="Pertea G."/>
            <person name="Van Tassell C.P."/>
            <person name="Sonstegard T.S."/>
            <person name="Marcais G."/>
            <person name="Roberts M."/>
            <person name="Subramanian P."/>
            <person name="Yorke J.A."/>
            <person name="Salzberg S.L."/>
        </authorList>
    </citation>
    <scope>NUCLEOTIDE SEQUENCE [LARGE SCALE GENOMIC DNA]</scope>
    <source>
        <strain>Hereford</strain>
    </source>
</reference>
<reference key="2">
    <citation type="submission" date="2018-03" db="EMBL/GenBank/DDBJ databases">
        <title>ARS-UCD1.2.</title>
        <authorList>
            <person name="Rosen B.D."/>
            <person name="Bickhart D.M."/>
            <person name="Koren S."/>
            <person name="Schnabel R.D."/>
            <person name="Hall R."/>
            <person name="Zimin A."/>
            <person name="Dreischer C."/>
            <person name="Schultheiss S."/>
            <person name="Schroeder S.G."/>
            <person name="Elsik C.G."/>
            <person name="Couldrey C."/>
            <person name="Liu G.E."/>
            <person name="Van Tassell C.P."/>
            <person name="Phillippy A.M."/>
            <person name="Smith T.P.L."/>
            <person name="Medrano J.F."/>
        </authorList>
    </citation>
    <scope>NUCLEOTIDE SEQUENCE [LARGE SCALE GENOMIC DNA]</scope>
    <source>
        <strain>Hereford</strain>
    </source>
</reference>
<reference key="3">
    <citation type="journal article" date="2023" name="Cell">
        <title>Structural specializations of the sperm tail.</title>
        <authorList>
            <person name="Leung M.R."/>
            <person name="Zeng J."/>
            <person name="Wang X."/>
            <person name="Roelofs M.C."/>
            <person name="Huang W."/>
            <person name="Zenezini Chiozzi R."/>
            <person name="Hevler J.F."/>
            <person name="Heck A.J.R."/>
            <person name="Dutcher S.K."/>
            <person name="Brown A."/>
            <person name="Zhang R."/>
            <person name="Zeev-Ben-Mordehai T."/>
        </authorList>
    </citation>
    <scope>FUNCTION</scope>
    <scope>SUBCELLULAR LOCATION</scope>
</reference>
<keyword id="KW-0966">Cell projection</keyword>
<keyword id="KW-0969">Cilium</keyword>
<keyword id="KW-0963">Cytoplasm</keyword>
<keyword id="KW-0206">Cytoskeleton</keyword>
<keyword id="KW-0282">Flagellum</keyword>
<keyword id="KW-1185">Reference proteome</keyword>
<organism>
    <name type="scientific">Bos taurus</name>
    <name type="common">Bovine</name>
    <dbReference type="NCBI Taxonomy" id="9913"/>
    <lineage>
        <taxon>Eukaryota</taxon>
        <taxon>Metazoa</taxon>
        <taxon>Chordata</taxon>
        <taxon>Craniata</taxon>
        <taxon>Vertebrata</taxon>
        <taxon>Euteleostomi</taxon>
        <taxon>Mammalia</taxon>
        <taxon>Eutheria</taxon>
        <taxon>Laurasiatheria</taxon>
        <taxon>Artiodactyla</taxon>
        <taxon>Ruminantia</taxon>
        <taxon>Pecora</taxon>
        <taxon>Bovidae</taxon>
        <taxon>Bovinae</taxon>
        <taxon>Bos</taxon>
    </lineage>
</organism>
<dbReference type="EMBL" id="NKLS02000004">
    <property type="status" value="NOT_ANNOTATED_CDS"/>
    <property type="molecule type" value="Genomic_DNA"/>
</dbReference>
<dbReference type="RefSeq" id="XP_005205610.1">
    <property type="nucleotide sequence ID" value="XM_005205553.3"/>
</dbReference>
<dbReference type="RefSeq" id="XP_015318549.1">
    <property type="nucleotide sequence ID" value="XM_015463063.1"/>
</dbReference>
<dbReference type="EMDB" id="EMD-17187"/>
<dbReference type="EMDB" id="EMD-50664"/>
<dbReference type="FunCoup" id="E1B9R1">
    <property type="interactions" value="380"/>
</dbReference>
<dbReference type="STRING" id="9913.ENSBTAP00000025898"/>
<dbReference type="PaxDb" id="9913-ENSBTAP00000025898"/>
<dbReference type="Ensembl" id="ENSBTAT00000089670.1">
    <property type="protein sequence ID" value="ENSBTAP00000082605.1"/>
    <property type="gene ID" value="ENSBTAG00000019445.6"/>
</dbReference>
<dbReference type="VEuPathDB" id="HostDB:ENSBTAG00000019445"/>
<dbReference type="VGNC" id="VGNC:52720">
    <property type="gene designation" value="SPMIP4"/>
</dbReference>
<dbReference type="eggNOG" id="ENOG502QUAM">
    <property type="taxonomic scope" value="Eukaryota"/>
</dbReference>
<dbReference type="GeneTree" id="ENSGT00390000015236"/>
<dbReference type="HOGENOM" id="CLU_038659_0_0_1"/>
<dbReference type="InParanoid" id="E1B9R1"/>
<dbReference type="OMA" id="DFPKCVE"/>
<dbReference type="TreeFam" id="TF336164"/>
<dbReference type="Proteomes" id="UP000009136">
    <property type="component" value="Chromosome 4"/>
</dbReference>
<dbReference type="Bgee" id="ENSBTAG00000019445">
    <property type="expression patterns" value="Expressed in semen and 66 other cell types or tissues"/>
</dbReference>
<dbReference type="GO" id="GO:0005813">
    <property type="term" value="C:centrosome"/>
    <property type="evidence" value="ECO:0000318"/>
    <property type="project" value="GO_Central"/>
</dbReference>
<dbReference type="GO" id="GO:0005737">
    <property type="term" value="C:cytoplasm"/>
    <property type="evidence" value="ECO:0007669"/>
    <property type="project" value="UniProtKB-KW"/>
</dbReference>
<dbReference type="GO" id="GO:0031514">
    <property type="term" value="C:motile cilium"/>
    <property type="evidence" value="ECO:0007669"/>
    <property type="project" value="UniProtKB-KW"/>
</dbReference>
<dbReference type="InterPro" id="IPR027886">
    <property type="entry name" value="SPMIP4"/>
</dbReference>
<dbReference type="PANTHER" id="PTHR31393">
    <property type="entry name" value="C5ORF31"/>
    <property type="match status" value="1"/>
</dbReference>
<dbReference type="PANTHER" id="PTHR31393:SF2">
    <property type="entry name" value="CHROMOSOME 7 OPEN READING FRAME 31"/>
    <property type="match status" value="1"/>
</dbReference>
<dbReference type="Pfam" id="PF15093">
    <property type="entry name" value="SPMIP4-like"/>
    <property type="match status" value="1"/>
</dbReference>
<proteinExistence type="inferred from homology"/>
<comment type="function">
    <text evidence="2">Microtubule inner protein (MIP) part of the dynein-decorated doublet microtubules (DMTs) in flagellum axoneme (PubMed:37327785). May serve to reinforce and thus stabilize the microtubule structure in the sperm flagella (PubMed:37327785).</text>
</comment>
<comment type="subcellular location">
    <subcellularLocation>
        <location evidence="1">Cytoplasm</location>
        <location evidence="1">Cytoskeleton</location>
        <location evidence="1">Microtubule organizing center</location>
        <location evidence="1">Centrosome</location>
    </subcellularLocation>
    <subcellularLocation>
        <location evidence="2">Cytoplasm</location>
        <location evidence="2">Cytoskeleton</location>
        <location evidence="2">Flagellum axoneme</location>
    </subcellularLocation>
    <text evidence="2">Localizes to the A-tubules of DMTs.</text>
</comment>
<evidence type="ECO:0000250" key="1">
    <source>
        <dbReference type="UniProtKB" id="Q8N865"/>
    </source>
</evidence>
<evidence type="ECO:0000269" key="2">
    <source>
    </source>
</evidence>
<protein>
    <recommendedName>
        <fullName>Sperm-associated microtubule inner protein 4</fullName>
    </recommendedName>
</protein>
<sequence>MEVIHGQPYCCRELEGADILSDTFYSNELHTPLETATRPTASEDRYQKFRQSLQRCRLPWGAEREYGGMIPISLPEEHRPKCEPPRVMGKGHQHYGFGGEIWPRKLPIEQFYYLSQNKKSDIYGNDSLLPKPPNSTVGEICSPYPIEHPYHTHISRGAMFPTFTSPKDLYTGIKARTQQPFPPTVPTKPYDTTVLKTRGNPYRYELLDFPMDSKKKALVWPGQRVYFDLPKCVEKNKPVFYPKPPKTFAPNTSLNSWDPITSLKEVNIQRNLEKSHWITSYNHDFTGLGPMNPLELDDYHEKEVAELTGQIGFDPEPQEKVHPALKPTRPLEGRIARLIQNQRPLEAILEQRPSSCPDCTPRVLCTFHTFVPSSTEMMALSDNIPADVTHKNQEIEEKIKEEQSLLSTYALPSCYPTKDLANTYDIKPFPKITDTKKTEDLYWRQLSLKPQLIPYCNPDHYIPYEHLNQYNVYQNPVSLSKPGILQSKPDLKTFDFEHFLSKPEQLTLNMEDDEETKPILGWIPRAGVAKPQTDLLELKNAFSKTGAQKRFHKSVLEDYKDLRDKEHLGKKHQFYGHNSYYFYN</sequence>
<feature type="chain" id="PRO_0000458632" description="Sperm-associated microtubule inner protein 4">
    <location>
        <begin position="1"/>
        <end position="584"/>
    </location>
</feature>
<accession>E1B9R1</accession>
<accession>A0AAA9SB56</accession>
<gene>
    <name type="primary">SPMIP4</name>
</gene>